<sequence length="184" mass="20166">LEFAAGIPGSVGGAVYMNAGAHGSDISRVLVKALILFEDGTIDWLTNEEMAFSYRTSILQNERPGICLEAVLQLEQKERDEIVAQMQKNKDYRKETQPVSNPCAGSIFRNPLPEHAGRLVDEAGLKGHQIGGAKVSEMHGNFIVNAGGATAQDVLDLIAFIQKTIKEKYDIDMHTEVEIIGEKR</sequence>
<proteinExistence type="inferred from homology"/>
<organism>
    <name type="scientific">Bacillus licheniformis</name>
    <dbReference type="NCBI Taxonomy" id="1402"/>
    <lineage>
        <taxon>Bacteria</taxon>
        <taxon>Bacillati</taxon>
        <taxon>Bacillota</taxon>
        <taxon>Bacilli</taxon>
        <taxon>Bacillales</taxon>
        <taxon>Bacillaceae</taxon>
        <taxon>Bacillus</taxon>
    </lineage>
</organism>
<protein>
    <recommendedName>
        <fullName>UDP-N-acetylenolpyruvoylglucosamine reductase</fullName>
        <ecNumber>1.3.1.98</ecNumber>
    </recommendedName>
    <alternativeName>
        <fullName>UDP-N-acetylmuramate dehydrogenase</fullName>
    </alternativeName>
</protein>
<evidence type="ECO:0000250" key="1"/>
<evidence type="ECO:0000305" key="2"/>
<accession>Q45305</accession>
<dbReference type="EC" id="1.3.1.98"/>
<dbReference type="EMBL" id="U01958">
    <property type="protein sequence ID" value="AAA57244.1"/>
    <property type="molecule type" value="Genomic_DNA"/>
</dbReference>
<dbReference type="PIR" id="I40220">
    <property type="entry name" value="I40220"/>
</dbReference>
<dbReference type="SMR" id="Q45305"/>
<dbReference type="UniPathway" id="UPA00219"/>
<dbReference type="GO" id="GO:0005829">
    <property type="term" value="C:cytosol"/>
    <property type="evidence" value="ECO:0007669"/>
    <property type="project" value="TreeGrafter"/>
</dbReference>
<dbReference type="GO" id="GO:0050660">
    <property type="term" value="F:flavin adenine dinucleotide binding"/>
    <property type="evidence" value="ECO:0007669"/>
    <property type="project" value="InterPro"/>
</dbReference>
<dbReference type="GO" id="GO:0008762">
    <property type="term" value="F:UDP-N-acetylmuramate dehydrogenase activity"/>
    <property type="evidence" value="ECO:0007669"/>
    <property type="project" value="UniProtKB-EC"/>
</dbReference>
<dbReference type="GO" id="GO:0051301">
    <property type="term" value="P:cell division"/>
    <property type="evidence" value="ECO:0007669"/>
    <property type="project" value="UniProtKB-KW"/>
</dbReference>
<dbReference type="GO" id="GO:0071555">
    <property type="term" value="P:cell wall organization"/>
    <property type="evidence" value="ECO:0007669"/>
    <property type="project" value="UniProtKB-KW"/>
</dbReference>
<dbReference type="GO" id="GO:0009252">
    <property type="term" value="P:peptidoglycan biosynthetic process"/>
    <property type="evidence" value="ECO:0007669"/>
    <property type="project" value="UniProtKB-UniPathway"/>
</dbReference>
<dbReference type="GO" id="GO:0008360">
    <property type="term" value="P:regulation of cell shape"/>
    <property type="evidence" value="ECO:0007669"/>
    <property type="project" value="UniProtKB-KW"/>
</dbReference>
<dbReference type="Gene3D" id="3.30.465.10">
    <property type="match status" value="1"/>
</dbReference>
<dbReference type="Gene3D" id="3.90.78.10">
    <property type="entry name" value="UDP-N-acetylenolpyruvoylglucosamine reductase, C-terminal domain"/>
    <property type="match status" value="1"/>
</dbReference>
<dbReference type="HAMAP" id="MF_00037">
    <property type="entry name" value="MurB"/>
    <property type="match status" value="1"/>
</dbReference>
<dbReference type="InterPro" id="IPR036318">
    <property type="entry name" value="FAD-bd_PCMH-like_sf"/>
</dbReference>
<dbReference type="InterPro" id="IPR016169">
    <property type="entry name" value="FAD-bd_PCMH_sub2"/>
</dbReference>
<dbReference type="InterPro" id="IPR003170">
    <property type="entry name" value="MurB"/>
</dbReference>
<dbReference type="InterPro" id="IPR011601">
    <property type="entry name" value="MurB_C"/>
</dbReference>
<dbReference type="InterPro" id="IPR036635">
    <property type="entry name" value="MurB_C_sf"/>
</dbReference>
<dbReference type="NCBIfam" id="TIGR00179">
    <property type="entry name" value="murB"/>
    <property type="match status" value="1"/>
</dbReference>
<dbReference type="PANTHER" id="PTHR21071">
    <property type="entry name" value="UDP-N-ACETYLENOLPYRUVOYLGLUCOSAMINE REDUCTASE"/>
    <property type="match status" value="1"/>
</dbReference>
<dbReference type="PANTHER" id="PTHR21071:SF5">
    <property type="entry name" value="UDP-N-ACETYLENOLPYRUVOYLGLUCOSAMINE REDUCTASE"/>
    <property type="match status" value="1"/>
</dbReference>
<dbReference type="Pfam" id="PF02873">
    <property type="entry name" value="MurB_C"/>
    <property type="match status" value="1"/>
</dbReference>
<dbReference type="SUPFAM" id="SSF56176">
    <property type="entry name" value="FAD-binding/transporter-associated domain-like"/>
    <property type="match status" value="1"/>
</dbReference>
<dbReference type="SUPFAM" id="SSF56194">
    <property type="entry name" value="Uridine diphospho-N-Acetylenolpyruvylglucosamine reductase, MurB, C-terminal domain"/>
    <property type="match status" value="1"/>
</dbReference>
<reference key="1">
    <citation type="journal article" date="1994" name="Gene">
        <title>Conservation of the 168 divIB gene in Bacillus subtilis W23 and B. licheniformis, and evidence for homology to ftsQ of Escherichia coli.</title>
        <authorList>
            <person name="Harry E.J."/>
            <person name="Partridge S.R."/>
            <person name="Weiss A.S."/>
            <person name="Wake R.G."/>
        </authorList>
    </citation>
    <scope>NUCLEOTIDE SEQUENCE [GENOMIC DNA]</scope>
    <source>
        <strain>5A2</strain>
    </source>
</reference>
<gene>
    <name type="primary">murB</name>
</gene>
<name>MURB_BACLI</name>
<feature type="chain" id="PRO_0000179177" description="UDP-N-acetylenolpyruvoylglucosamine reductase">
    <location>
        <begin position="1" status="less than"/>
        <end position="184"/>
    </location>
</feature>
<feature type="active site" evidence="1">
    <location>
        <position position="55"/>
    </location>
</feature>
<feature type="active site" description="Proton donor" evidence="1">
    <location>
        <position position="106"/>
    </location>
</feature>
<feature type="active site" evidence="1">
    <location>
        <position position="176"/>
    </location>
</feature>
<feature type="non-terminal residue">
    <location>
        <position position="1"/>
    </location>
</feature>
<keyword id="KW-0131">Cell cycle</keyword>
<keyword id="KW-0132">Cell division</keyword>
<keyword id="KW-0133">Cell shape</keyword>
<keyword id="KW-0961">Cell wall biogenesis/degradation</keyword>
<keyword id="KW-0963">Cytoplasm</keyword>
<keyword id="KW-0274">FAD</keyword>
<keyword id="KW-0285">Flavoprotein</keyword>
<keyword id="KW-0521">NADP</keyword>
<keyword id="KW-0560">Oxidoreductase</keyword>
<keyword id="KW-0573">Peptidoglycan synthesis</keyword>
<comment type="function">
    <text evidence="1">Cell wall formation.</text>
</comment>
<comment type="catalytic activity">
    <reaction>
        <text>UDP-N-acetyl-alpha-D-muramate + NADP(+) = UDP-N-acetyl-3-O-(1-carboxyvinyl)-alpha-D-glucosamine + NADPH + H(+)</text>
        <dbReference type="Rhea" id="RHEA:12248"/>
        <dbReference type="ChEBI" id="CHEBI:15378"/>
        <dbReference type="ChEBI" id="CHEBI:57783"/>
        <dbReference type="ChEBI" id="CHEBI:58349"/>
        <dbReference type="ChEBI" id="CHEBI:68483"/>
        <dbReference type="ChEBI" id="CHEBI:70757"/>
        <dbReference type="EC" id="1.3.1.98"/>
    </reaction>
</comment>
<comment type="cofactor">
    <cofactor>
        <name>FAD</name>
        <dbReference type="ChEBI" id="CHEBI:57692"/>
    </cofactor>
</comment>
<comment type="pathway">
    <text>Cell wall biogenesis; peptidoglycan biosynthesis.</text>
</comment>
<comment type="subcellular location">
    <subcellularLocation>
        <location evidence="1">Cytoplasm</location>
    </subcellularLocation>
</comment>
<comment type="similarity">
    <text evidence="2">Belongs to the MurB family.</text>
</comment>